<organism>
    <name type="scientific">Mus musculus</name>
    <name type="common">Mouse</name>
    <dbReference type="NCBI Taxonomy" id="10090"/>
    <lineage>
        <taxon>Eukaryota</taxon>
        <taxon>Metazoa</taxon>
        <taxon>Chordata</taxon>
        <taxon>Craniata</taxon>
        <taxon>Vertebrata</taxon>
        <taxon>Euteleostomi</taxon>
        <taxon>Mammalia</taxon>
        <taxon>Eutheria</taxon>
        <taxon>Euarchontoglires</taxon>
        <taxon>Glires</taxon>
        <taxon>Rodentia</taxon>
        <taxon>Myomorpha</taxon>
        <taxon>Muroidea</taxon>
        <taxon>Muridae</taxon>
        <taxon>Murinae</taxon>
        <taxon>Mus</taxon>
        <taxon>Mus</taxon>
    </lineage>
</organism>
<comment type="function">
    <text evidence="2 3">Regulates the activity of L-type calcium channels that contain CACNA1C as pore-forming subunit (By similarity). Regulates the trafficking and gating properties of AMPA-selective glutamate receptors (AMPARs). Promotes their targeting to the cell membrane and synapses and modulates their gating properties by slowing their rates of activation, deactivation and desensitization and by mediating their resensitization (By similarity). Shows specificity only for GRIA1 and GRIA2 (By similarity).</text>
</comment>
<comment type="subunit">
    <text evidence="2 3">Interacts with CACNA1C. Identified in a complex with the L-type calcium channel subunits CACNA1C, CACNA2D1 and either CACNB1 or CACNB2 (By similarity). Acts as an auxiliary subunit for AMPA-selective glutamate receptors (AMPARs), such as GRIA1 and GRIA2 (By similarity).</text>
</comment>
<comment type="subcellular location">
    <subcellularLocation>
        <location evidence="2">Cell membrane</location>
        <topology evidence="1">Multi-pass membrane protein</topology>
    </subcellularLocation>
</comment>
<comment type="similarity">
    <text evidence="5">Belongs to the PMP-22/EMP/MP20 family. CACNG subfamily.</text>
</comment>
<sequence length="275" mass="31003">MSHCSSRALTLLSSVFGACGLLLVGIAVSTDYWLYMEEGTVLPQNQTTEVKMALHAGLWRVCFFAGREKGRCVASEYFLEPEINLVTENTENILKTVRTATPFPMVSLFLVFTAFVISNIGHIRPQRTILAFVSGIFFILSGLSLVVGLVLYISSINDEVMNRPSSSEQYFHYRYGWSFAFAASSFLLKEGAGVMSVYLFTKRYAEEEMYRPHPAFYRPRLSDCSDYSGQFLQPEAWRRGRSPSDISSDVSIQMTQNYPPAIKYPDHLHISTSPC</sequence>
<accession>P62956</accession>
<accession>Q8VBX3</accession>
<accession>Q8WXS6</accession>
<accession>Q9BXT1</accession>
<protein>
    <recommendedName>
        <fullName>Voltage-dependent calcium channel gamma-7 subunit</fullName>
    </recommendedName>
    <alternativeName>
        <fullName>Neuronal voltage-gated calcium channel gamma-7 subunit</fullName>
    </alternativeName>
    <alternativeName>
        <fullName>Transmembrane AMPAR regulatory protein gamma-7</fullName>
        <shortName>TARP gamma-7</shortName>
    </alternativeName>
</protein>
<gene>
    <name type="primary">Cacng7</name>
</gene>
<evidence type="ECO:0000250" key="1"/>
<evidence type="ECO:0000250" key="2">
    <source>
        <dbReference type="UniProtKB" id="P62955"/>
    </source>
</evidence>
<evidence type="ECO:0000250" key="3">
    <source>
        <dbReference type="UniProtKB" id="P62957"/>
    </source>
</evidence>
<evidence type="ECO:0000255" key="4"/>
<evidence type="ECO:0000305" key="5"/>
<evidence type="ECO:0007744" key="6">
    <source>
    </source>
</evidence>
<proteinExistence type="evidence at protein level"/>
<name>CCG7_MOUSE</name>
<feature type="chain" id="PRO_0000164688" description="Voltage-dependent calcium channel gamma-7 subunit">
    <location>
        <begin position="1"/>
        <end position="275"/>
    </location>
</feature>
<feature type="transmembrane region" description="Helical" evidence="4">
    <location>
        <begin position="8"/>
        <end position="28"/>
    </location>
</feature>
<feature type="transmembrane region" description="Helical" evidence="4">
    <location>
        <begin position="103"/>
        <end position="123"/>
    </location>
</feature>
<feature type="transmembrane region" description="Helical" evidence="4">
    <location>
        <begin position="129"/>
        <end position="149"/>
    </location>
</feature>
<feature type="transmembrane region" description="Helical" evidence="4">
    <location>
        <begin position="179"/>
        <end position="199"/>
    </location>
</feature>
<feature type="modified residue" description="Phosphoserine" evidence="6">
    <location>
        <position position="222"/>
    </location>
</feature>
<feature type="modified residue" description="Phosphoserine" evidence="6">
    <location>
        <position position="225"/>
    </location>
</feature>
<feature type="modified residue" description="Phosphoserine" evidence="6">
    <location>
        <position position="273"/>
    </location>
</feature>
<dbReference type="EMBL" id="AF361349">
    <property type="protein sequence ID" value="AAL50044.1"/>
    <property type="molecule type" value="mRNA"/>
</dbReference>
<dbReference type="EMBL" id="AF458899">
    <property type="protein sequence ID" value="AAM00596.1"/>
    <property type="molecule type" value="mRNA"/>
</dbReference>
<dbReference type="CCDS" id="CCDS39725.1"/>
<dbReference type="RefSeq" id="NP_001407137.1">
    <property type="nucleotide sequence ID" value="NM_001420208.1"/>
</dbReference>
<dbReference type="RefSeq" id="NP_001407138.1">
    <property type="nucleotide sequence ID" value="NM_001420209.1"/>
</dbReference>
<dbReference type="RefSeq" id="NP_573452.3">
    <property type="nucleotide sequence ID" value="NM_133189.5"/>
</dbReference>
<dbReference type="RefSeq" id="XP_006540504.1">
    <property type="nucleotide sequence ID" value="XM_006540441.3"/>
</dbReference>
<dbReference type="SMR" id="P62956"/>
<dbReference type="FunCoup" id="P62956">
    <property type="interactions" value="672"/>
</dbReference>
<dbReference type="STRING" id="10090.ENSMUSP00000090567"/>
<dbReference type="iPTMnet" id="P62956"/>
<dbReference type="PhosphoSitePlus" id="P62956"/>
<dbReference type="SwissPalm" id="P62956"/>
<dbReference type="PaxDb" id="10090-ENSMUSP00000090567"/>
<dbReference type="ProteomicsDB" id="281508"/>
<dbReference type="Antibodypedia" id="32765">
    <property type="antibodies" value="112 antibodies from 23 providers"/>
</dbReference>
<dbReference type="DNASU" id="81904"/>
<dbReference type="Ensembl" id="ENSMUST00000092891.6">
    <property type="protein sequence ID" value="ENSMUSP00000090567.5"/>
    <property type="gene ID" value="ENSMUSG00000069806.6"/>
</dbReference>
<dbReference type="GeneID" id="81904"/>
<dbReference type="KEGG" id="mmu:81904"/>
<dbReference type="UCSC" id="uc009euu.1">
    <property type="organism name" value="mouse"/>
</dbReference>
<dbReference type="AGR" id="MGI:1932374"/>
<dbReference type="CTD" id="59284"/>
<dbReference type="MGI" id="MGI:1932374">
    <property type="gene designation" value="Cacng7"/>
</dbReference>
<dbReference type="VEuPathDB" id="HostDB:ENSMUSG00000069806"/>
<dbReference type="eggNOG" id="ENOG502QTQ7">
    <property type="taxonomic scope" value="Eukaryota"/>
</dbReference>
<dbReference type="GeneTree" id="ENSGT01050000244961"/>
<dbReference type="HOGENOM" id="CLU_053704_1_1_1"/>
<dbReference type="InParanoid" id="P62956"/>
<dbReference type="OMA" id="QCISIDY"/>
<dbReference type="OrthoDB" id="5917530at2759"/>
<dbReference type="PhylomeDB" id="P62956"/>
<dbReference type="TreeFam" id="TF327980"/>
<dbReference type="Reactome" id="R-MMU-5576892">
    <property type="pathway name" value="Phase 0 - rapid depolarisation"/>
</dbReference>
<dbReference type="Reactome" id="R-MMU-5576893">
    <property type="pathway name" value="Phase 2 - plateau phase"/>
</dbReference>
<dbReference type="BioGRID-ORCS" id="81904">
    <property type="hits" value="0 hits in 77 CRISPR screens"/>
</dbReference>
<dbReference type="ChiTaRS" id="Cacng7">
    <property type="organism name" value="mouse"/>
</dbReference>
<dbReference type="PRO" id="PR:P62956"/>
<dbReference type="Proteomes" id="UP000000589">
    <property type="component" value="Chromosome 7"/>
</dbReference>
<dbReference type="RNAct" id="P62956">
    <property type="molecule type" value="protein"/>
</dbReference>
<dbReference type="Bgee" id="ENSMUSG00000069806">
    <property type="expression patterns" value="Expressed in olfactory bulb and 72 other cell types or tissues"/>
</dbReference>
<dbReference type="ExpressionAtlas" id="P62956">
    <property type="expression patterns" value="baseline and differential"/>
</dbReference>
<dbReference type="GO" id="GO:0032281">
    <property type="term" value="C:AMPA glutamate receptor complex"/>
    <property type="evidence" value="ECO:0000250"/>
    <property type="project" value="UniProtKB"/>
</dbReference>
<dbReference type="GO" id="GO:0044300">
    <property type="term" value="C:cerebellar mossy fiber"/>
    <property type="evidence" value="ECO:0007669"/>
    <property type="project" value="Ensembl"/>
</dbReference>
<dbReference type="GO" id="GO:0005769">
    <property type="term" value="C:early endosome"/>
    <property type="evidence" value="ECO:0007669"/>
    <property type="project" value="Ensembl"/>
</dbReference>
<dbReference type="GO" id="GO:0098978">
    <property type="term" value="C:glutamatergic synapse"/>
    <property type="evidence" value="ECO:0000314"/>
    <property type="project" value="SynGO"/>
</dbReference>
<dbReference type="GO" id="GO:1990454">
    <property type="term" value="C:L-type voltage-gated calcium channel complex"/>
    <property type="evidence" value="ECO:0000250"/>
    <property type="project" value="UniProtKB"/>
</dbReference>
<dbReference type="GO" id="GO:0043025">
    <property type="term" value="C:neuronal cell body"/>
    <property type="evidence" value="ECO:0007669"/>
    <property type="project" value="Ensembl"/>
</dbReference>
<dbReference type="GO" id="GO:0005886">
    <property type="term" value="C:plasma membrane"/>
    <property type="evidence" value="ECO:0000304"/>
    <property type="project" value="Reactome"/>
</dbReference>
<dbReference type="GO" id="GO:0098839">
    <property type="term" value="C:postsynaptic density membrane"/>
    <property type="evidence" value="ECO:0007669"/>
    <property type="project" value="Ensembl"/>
</dbReference>
<dbReference type="GO" id="GO:0005262">
    <property type="term" value="F:calcium channel activity"/>
    <property type="evidence" value="ECO:0007669"/>
    <property type="project" value="UniProtKB-KW"/>
</dbReference>
<dbReference type="GO" id="GO:0005246">
    <property type="term" value="F:calcium channel regulator activity"/>
    <property type="evidence" value="ECO:0000250"/>
    <property type="project" value="UniProtKB"/>
</dbReference>
<dbReference type="GO" id="GO:0099645">
    <property type="term" value="P:neurotransmitter receptor localization to postsynaptic specialization membrane"/>
    <property type="evidence" value="ECO:0000314"/>
    <property type="project" value="SynGO"/>
</dbReference>
<dbReference type="GO" id="GO:1903861">
    <property type="term" value="P:positive regulation of dendrite extension"/>
    <property type="evidence" value="ECO:0007669"/>
    <property type="project" value="Ensembl"/>
</dbReference>
<dbReference type="GO" id="GO:2000311">
    <property type="term" value="P:regulation of AMPA receptor activity"/>
    <property type="evidence" value="ECO:0000250"/>
    <property type="project" value="UniProtKB"/>
</dbReference>
<dbReference type="GO" id="GO:0043488">
    <property type="term" value="P:regulation of mRNA stability"/>
    <property type="evidence" value="ECO:0007669"/>
    <property type="project" value="Ensembl"/>
</dbReference>
<dbReference type="FunFam" id="1.20.140.150:FF:000003">
    <property type="entry name" value="Voltage-dependent calcium channel gamma-7 subunit"/>
    <property type="match status" value="1"/>
</dbReference>
<dbReference type="Gene3D" id="1.20.140.150">
    <property type="match status" value="1"/>
</dbReference>
<dbReference type="InterPro" id="IPR051072">
    <property type="entry name" value="CACNG_subunit"/>
</dbReference>
<dbReference type="InterPro" id="IPR004031">
    <property type="entry name" value="PMP22/EMP/MP20/Claudin"/>
</dbReference>
<dbReference type="InterPro" id="IPR008371">
    <property type="entry name" value="VDCC_g7su"/>
</dbReference>
<dbReference type="InterPro" id="IPR008368">
    <property type="entry name" value="VDCC_gsu"/>
</dbReference>
<dbReference type="PANTHER" id="PTHR12107">
    <property type="entry name" value="VOLTAGE-DEPENDENT CALCIUM CHANNEL GAMMA SUBUNIT"/>
    <property type="match status" value="1"/>
</dbReference>
<dbReference type="PANTHER" id="PTHR12107:SF12">
    <property type="entry name" value="VOLTAGE-DEPENDENT CALCIUM CHANNEL GAMMA-7 SUBUNIT"/>
    <property type="match status" value="1"/>
</dbReference>
<dbReference type="Pfam" id="PF13903">
    <property type="entry name" value="Claudin_2"/>
    <property type="match status" value="1"/>
</dbReference>
<dbReference type="PRINTS" id="PR01792">
    <property type="entry name" value="VDCCGAMMA"/>
</dbReference>
<dbReference type="PRINTS" id="PR01795">
    <property type="entry name" value="VDCCGAMMA7"/>
</dbReference>
<keyword id="KW-0106">Calcium</keyword>
<keyword id="KW-0107">Calcium channel</keyword>
<keyword id="KW-0109">Calcium transport</keyword>
<keyword id="KW-1003">Cell membrane</keyword>
<keyword id="KW-0407">Ion channel</keyword>
<keyword id="KW-0406">Ion transport</keyword>
<keyword id="KW-0472">Membrane</keyword>
<keyword id="KW-0597">Phosphoprotein</keyword>
<keyword id="KW-1185">Reference proteome</keyword>
<keyword id="KW-0812">Transmembrane</keyword>
<keyword id="KW-1133">Transmembrane helix</keyword>
<keyword id="KW-0813">Transport</keyword>
<keyword id="KW-0851">Voltage-gated channel</keyword>
<reference key="1">
    <citation type="journal article" date="2001" name="Gene">
        <title>Calcium channel gamma subunits provide insights into the evolution of this gene family.</title>
        <authorList>
            <person name="Chu P.-J."/>
            <person name="Robertson H.M."/>
            <person name="Best P.M."/>
        </authorList>
    </citation>
    <scope>NUCLEOTIDE SEQUENCE [MRNA]</scope>
    <source>
        <strain>BALB/cJ</strain>
    </source>
</reference>
<reference key="2">
    <citation type="journal article" date="2002" name="EMBO J.">
        <title>The novel product of a five-exon stargazin-related gene abolishes CaV2.2 calcium channel expression.</title>
        <authorList>
            <person name="Moss F.J."/>
            <person name="Viard P."/>
            <person name="Davies A."/>
            <person name="Bertaso F."/>
            <person name="Page K.M."/>
            <person name="Graham A."/>
            <person name="Canti C."/>
            <person name="Plumpton M."/>
            <person name="Plumpton C."/>
            <person name="Clare J.J."/>
            <person name="Dolphin A.C."/>
        </authorList>
    </citation>
    <scope>NUCLEOTIDE SEQUENCE [MRNA]</scope>
    <source>
        <strain>TKDU</strain>
    </source>
</reference>
<reference key="3">
    <citation type="journal article" date="2010" name="Cell">
        <title>A tissue-specific atlas of mouse protein phosphorylation and expression.</title>
        <authorList>
            <person name="Huttlin E.L."/>
            <person name="Jedrychowski M.P."/>
            <person name="Elias J.E."/>
            <person name="Goswami T."/>
            <person name="Rad R."/>
            <person name="Beausoleil S.A."/>
            <person name="Villen J."/>
            <person name="Haas W."/>
            <person name="Sowa M.E."/>
            <person name="Gygi S.P."/>
        </authorList>
    </citation>
    <scope>PHOSPHORYLATION [LARGE SCALE ANALYSIS] AT SER-222; SER-225 AND SER-273</scope>
    <scope>IDENTIFICATION BY MASS SPECTROMETRY [LARGE SCALE ANALYSIS]</scope>
    <source>
        <tissue>Brain</tissue>
    </source>
</reference>